<proteinExistence type="evidence at protein level"/>
<keyword id="KW-0067">ATP-binding</keyword>
<keyword id="KW-0963">Cytoplasm</keyword>
<keyword id="KW-0903">Direct protein sequencing</keyword>
<keyword id="KW-0315">Glutamine amidotransferase</keyword>
<keyword id="KW-0436">Ligase</keyword>
<keyword id="KW-0460">Magnesium</keyword>
<keyword id="KW-0479">Metal-binding</keyword>
<keyword id="KW-0547">Nucleotide-binding</keyword>
<keyword id="KW-0658">Purine biosynthesis</keyword>
<keyword id="KW-1185">Reference proteome</keyword>
<accession>P15254</accession>
<accession>P78097</accession>
<accession>Q2MAH3</accession>
<gene>
    <name evidence="1" type="primary">purL</name>
    <name type="synonym">purI</name>
    <name type="ordered locus">b2557</name>
    <name type="ordered locus">JW2541</name>
</gene>
<dbReference type="EC" id="6.3.5.3" evidence="1"/>
<dbReference type="EMBL" id="M19501">
    <property type="protein sequence ID" value="AAA24456.1"/>
    <property type="molecule type" value="Genomic_DNA"/>
</dbReference>
<dbReference type="EMBL" id="U36841">
    <property type="protein sequence ID" value="AAA79819.1"/>
    <property type="molecule type" value="Genomic_DNA"/>
</dbReference>
<dbReference type="EMBL" id="U00096">
    <property type="protein sequence ID" value="AAT48143.1"/>
    <property type="molecule type" value="Genomic_DNA"/>
</dbReference>
<dbReference type="EMBL" id="AP009048">
    <property type="protein sequence ID" value="BAE76733.1"/>
    <property type="molecule type" value="Genomic_DNA"/>
</dbReference>
<dbReference type="PIR" id="D65033">
    <property type="entry name" value="SYECPG"/>
</dbReference>
<dbReference type="RefSeq" id="WP_000970102.1">
    <property type="nucleotide sequence ID" value="NZ_LN832404.1"/>
</dbReference>
<dbReference type="RefSeq" id="YP_026170.1">
    <property type="nucleotide sequence ID" value="NC_000913.3"/>
</dbReference>
<dbReference type="SMR" id="P15254"/>
<dbReference type="BioGRID" id="4259206">
    <property type="interactions" value="81"/>
</dbReference>
<dbReference type="BioGRID" id="851371">
    <property type="interactions" value="1"/>
</dbReference>
<dbReference type="DIP" id="DIP-10614N"/>
<dbReference type="FunCoup" id="P15254">
    <property type="interactions" value="822"/>
</dbReference>
<dbReference type="IntAct" id="P15254">
    <property type="interactions" value="14"/>
</dbReference>
<dbReference type="STRING" id="511145.b2557"/>
<dbReference type="MEROPS" id="C56.972"/>
<dbReference type="jPOST" id="P15254"/>
<dbReference type="PaxDb" id="511145-b2557"/>
<dbReference type="EnsemblBacteria" id="AAT48143">
    <property type="protein sequence ID" value="AAT48143"/>
    <property type="gene ID" value="b2557"/>
</dbReference>
<dbReference type="GeneID" id="947032"/>
<dbReference type="KEGG" id="ecj:JW2541"/>
<dbReference type="KEGG" id="eco:b2557"/>
<dbReference type="KEGG" id="ecoc:C3026_14155"/>
<dbReference type="PATRIC" id="fig|1411691.4.peg.4177"/>
<dbReference type="EchoBASE" id="EB0790"/>
<dbReference type="eggNOG" id="COG0046">
    <property type="taxonomic scope" value="Bacteria"/>
</dbReference>
<dbReference type="eggNOG" id="COG0047">
    <property type="taxonomic scope" value="Bacteria"/>
</dbReference>
<dbReference type="HOGENOM" id="CLU_001031_0_2_6"/>
<dbReference type="InParanoid" id="P15254"/>
<dbReference type="OMA" id="LSANWMW"/>
<dbReference type="OrthoDB" id="9804441at2"/>
<dbReference type="PhylomeDB" id="P15254"/>
<dbReference type="BioCyc" id="EcoCyc:FGAMSYN-MONOMER"/>
<dbReference type="BioCyc" id="MetaCyc:FGAMSYN-MONOMER"/>
<dbReference type="SABIO-RK" id="P15254"/>
<dbReference type="UniPathway" id="UPA00074">
    <property type="reaction ID" value="UER00128"/>
</dbReference>
<dbReference type="PRO" id="PR:P15254"/>
<dbReference type="Proteomes" id="UP000000625">
    <property type="component" value="Chromosome"/>
</dbReference>
<dbReference type="GO" id="GO:0005737">
    <property type="term" value="C:cytoplasm"/>
    <property type="evidence" value="ECO:0000314"/>
    <property type="project" value="EcoliWiki"/>
</dbReference>
<dbReference type="GO" id="GO:0005829">
    <property type="term" value="C:cytosol"/>
    <property type="evidence" value="ECO:0000314"/>
    <property type="project" value="EcoCyc"/>
</dbReference>
<dbReference type="GO" id="GO:0005524">
    <property type="term" value="F:ATP binding"/>
    <property type="evidence" value="ECO:0000314"/>
    <property type="project" value="EcoliWiki"/>
</dbReference>
<dbReference type="GO" id="GO:0016887">
    <property type="term" value="F:ATP hydrolysis activity"/>
    <property type="evidence" value="ECO:0000314"/>
    <property type="project" value="EcoliWiki"/>
</dbReference>
<dbReference type="GO" id="GO:0046872">
    <property type="term" value="F:metal ion binding"/>
    <property type="evidence" value="ECO:0007669"/>
    <property type="project" value="UniProtKB-KW"/>
</dbReference>
<dbReference type="GO" id="GO:0004642">
    <property type="term" value="F:phosphoribosylformylglycinamidine synthase activity"/>
    <property type="evidence" value="ECO:0000314"/>
    <property type="project" value="EcoCyc"/>
</dbReference>
<dbReference type="GO" id="GO:0006189">
    <property type="term" value="P:'de novo' IMP biosynthetic process"/>
    <property type="evidence" value="ECO:0000305"/>
    <property type="project" value="EcoliWiki"/>
</dbReference>
<dbReference type="GO" id="GO:0006541">
    <property type="term" value="P:glutamine metabolic process"/>
    <property type="evidence" value="ECO:0000314"/>
    <property type="project" value="EcoliWiki"/>
</dbReference>
<dbReference type="GO" id="GO:0006164">
    <property type="term" value="P:purine nucleotide biosynthetic process"/>
    <property type="evidence" value="ECO:0000318"/>
    <property type="project" value="GO_Central"/>
</dbReference>
<dbReference type="CDD" id="cd01740">
    <property type="entry name" value="GATase1_FGAR_AT"/>
    <property type="match status" value="1"/>
</dbReference>
<dbReference type="CDD" id="cd02203">
    <property type="entry name" value="PurL_repeat1"/>
    <property type="match status" value="1"/>
</dbReference>
<dbReference type="FunFam" id="1.10.8.750:FF:000002">
    <property type="entry name" value="Phosphoribosylformylglycinamidine synthase"/>
    <property type="match status" value="1"/>
</dbReference>
<dbReference type="FunFam" id="3.30.1330.10:FF:000002">
    <property type="entry name" value="Phosphoribosylformylglycinamidine synthase"/>
    <property type="match status" value="1"/>
</dbReference>
<dbReference type="FunFam" id="3.30.1330.10:FF:000005">
    <property type="entry name" value="Phosphoribosylformylglycinamidine synthase"/>
    <property type="match status" value="1"/>
</dbReference>
<dbReference type="FunFam" id="3.40.50.880:FF:000008">
    <property type="entry name" value="Phosphoribosylformylglycinamidine synthase"/>
    <property type="match status" value="1"/>
</dbReference>
<dbReference type="FunFam" id="3.90.650.10:FF:000002">
    <property type="entry name" value="Phosphoribosylformylglycinamidine synthase"/>
    <property type="match status" value="1"/>
</dbReference>
<dbReference type="FunFam" id="3.90.650.10:FF:000005">
    <property type="entry name" value="Phosphoribosylformylglycinamidine synthase"/>
    <property type="match status" value="1"/>
</dbReference>
<dbReference type="Gene3D" id="3.40.50.880">
    <property type="match status" value="1"/>
</dbReference>
<dbReference type="Gene3D" id="1.10.8.750">
    <property type="entry name" value="Phosphoribosylformylglycinamidine synthase, linker domain"/>
    <property type="match status" value="1"/>
</dbReference>
<dbReference type="Gene3D" id="3.90.650.10">
    <property type="entry name" value="PurM-like C-terminal domain"/>
    <property type="match status" value="2"/>
</dbReference>
<dbReference type="Gene3D" id="3.30.1330.10">
    <property type="entry name" value="PurM-like, N-terminal domain"/>
    <property type="match status" value="2"/>
</dbReference>
<dbReference type="HAMAP" id="MF_00419">
    <property type="entry name" value="PurL_1"/>
    <property type="match status" value="1"/>
</dbReference>
<dbReference type="InterPro" id="IPR029062">
    <property type="entry name" value="Class_I_gatase-like"/>
</dbReference>
<dbReference type="InterPro" id="IPR040707">
    <property type="entry name" value="FGAR-AT_N"/>
</dbReference>
<dbReference type="InterPro" id="IPR055181">
    <property type="entry name" value="FGAR-AT_PurM_N-like"/>
</dbReference>
<dbReference type="InterPro" id="IPR010073">
    <property type="entry name" value="PurL_large"/>
</dbReference>
<dbReference type="InterPro" id="IPR041609">
    <property type="entry name" value="PurL_linker"/>
</dbReference>
<dbReference type="InterPro" id="IPR010918">
    <property type="entry name" value="PurM-like_C_dom"/>
</dbReference>
<dbReference type="InterPro" id="IPR036676">
    <property type="entry name" value="PurM-like_C_sf"/>
</dbReference>
<dbReference type="InterPro" id="IPR036921">
    <property type="entry name" value="PurM-like_N_sf"/>
</dbReference>
<dbReference type="InterPro" id="IPR036604">
    <property type="entry name" value="PurS-like_sf"/>
</dbReference>
<dbReference type="NCBIfam" id="TIGR01735">
    <property type="entry name" value="FGAM_synt"/>
    <property type="match status" value="1"/>
</dbReference>
<dbReference type="NCBIfam" id="NF003672">
    <property type="entry name" value="PRK05297.1"/>
    <property type="match status" value="1"/>
</dbReference>
<dbReference type="PANTHER" id="PTHR10099">
    <property type="entry name" value="PHOSPHORIBOSYLFORMYLGLYCINAMIDINE SYNTHASE"/>
    <property type="match status" value="1"/>
</dbReference>
<dbReference type="PANTHER" id="PTHR10099:SF1">
    <property type="entry name" value="PHOSPHORIBOSYLFORMYLGLYCINAMIDINE SYNTHASE"/>
    <property type="match status" value="1"/>
</dbReference>
<dbReference type="Pfam" id="PF02769">
    <property type="entry name" value="AIRS_C"/>
    <property type="match status" value="2"/>
</dbReference>
<dbReference type="Pfam" id="PF18072">
    <property type="entry name" value="FGAR-AT_linker"/>
    <property type="match status" value="1"/>
</dbReference>
<dbReference type="Pfam" id="PF18076">
    <property type="entry name" value="FGAR-AT_N"/>
    <property type="match status" value="1"/>
</dbReference>
<dbReference type="Pfam" id="PF22689">
    <property type="entry name" value="FGAR-AT_PurM_N-like"/>
    <property type="match status" value="1"/>
</dbReference>
<dbReference type="Pfam" id="PF13507">
    <property type="entry name" value="GATase_5"/>
    <property type="match status" value="1"/>
</dbReference>
<dbReference type="SMART" id="SM01211">
    <property type="entry name" value="GATase_5"/>
    <property type="match status" value="1"/>
</dbReference>
<dbReference type="SUPFAM" id="SSF52317">
    <property type="entry name" value="Class I glutamine amidotransferase-like"/>
    <property type="match status" value="1"/>
</dbReference>
<dbReference type="SUPFAM" id="SSF109736">
    <property type="entry name" value="FGAM synthase PurL, linker domain"/>
    <property type="match status" value="1"/>
</dbReference>
<dbReference type="SUPFAM" id="SSF56042">
    <property type="entry name" value="PurM C-terminal domain-like"/>
    <property type="match status" value="2"/>
</dbReference>
<dbReference type="SUPFAM" id="SSF55326">
    <property type="entry name" value="PurM N-terminal domain-like"/>
    <property type="match status" value="2"/>
</dbReference>
<dbReference type="SUPFAM" id="SSF82697">
    <property type="entry name" value="PurS-like"/>
    <property type="match status" value="1"/>
</dbReference>
<dbReference type="PROSITE" id="PS51273">
    <property type="entry name" value="GATASE_TYPE_1"/>
    <property type="match status" value="1"/>
</dbReference>
<feature type="chain" id="PRO_0000100406" description="Phosphoribosylformylglycinamidine synthase">
    <location>
        <begin position="1"/>
        <end position="1295"/>
    </location>
</feature>
<feature type="domain" description="Glutamine amidotransferase type-1" evidence="1">
    <location>
        <begin position="1042"/>
        <end position="1295"/>
    </location>
</feature>
<feature type="region of interest" description="Disordered" evidence="2">
    <location>
        <begin position="305"/>
        <end position="327"/>
    </location>
</feature>
<feature type="active site" description="Nucleophile" evidence="1">
    <location>
        <position position="1135"/>
    </location>
</feature>
<feature type="active site" evidence="1">
    <location>
        <position position="1260"/>
    </location>
</feature>
<feature type="active site" evidence="1">
    <location>
        <position position="1262"/>
    </location>
</feature>
<feature type="binding site" evidence="1">
    <location>
        <begin position="307"/>
        <end position="318"/>
    </location>
    <ligand>
        <name>ATP</name>
        <dbReference type="ChEBI" id="CHEBI:30616"/>
    </ligand>
</feature>
<feature type="binding site" evidence="1">
    <location>
        <position position="678"/>
    </location>
    <ligand>
        <name>ATP</name>
        <dbReference type="ChEBI" id="CHEBI:30616"/>
    </ligand>
</feature>
<feature type="binding site" evidence="1">
    <location>
        <position position="718"/>
    </location>
    <ligand>
        <name>Mg(2+)</name>
        <dbReference type="ChEBI" id="CHEBI:18420"/>
    </ligand>
</feature>
<feature type="binding site" evidence="1">
    <location>
        <position position="722"/>
    </location>
    <ligand>
        <name>Mg(2+)</name>
        <dbReference type="ChEBI" id="CHEBI:18420"/>
    </ligand>
</feature>
<feature type="binding site" evidence="1">
    <location>
        <position position="884"/>
    </location>
    <ligand>
        <name>Mg(2+)</name>
        <dbReference type="ChEBI" id="CHEBI:18420"/>
    </ligand>
</feature>
<feature type="binding site" evidence="1">
    <location>
        <position position="886"/>
    </location>
    <ligand>
        <name>ATP</name>
        <dbReference type="ChEBI" id="CHEBI:30616"/>
    </ligand>
</feature>
<protein>
    <recommendedName>
        <fullName evidence="1">Phosphoribosylformylglycinamidine synthase</fullName>
        <shortName evidence="1">FGAM synthase</shortName>
        <shortName evidence="1">FGAMS</shortName>
        <ecNumber evidence="1">6.3.5.3</ecNumber>
    </recommendedName>
    <alternativeName>
        <fullName evidence="1">Formylglycinamide ribonucleotide amidotransferase</fullName>
        <shortName evidence="1">FGAR amidotransferase</shortName>
        <shortName evidence="1">FGAR-AT</shortName>
    </alternativeName>
</protein>
<evidence type="ECO:0000255" key="1">
    <source>
        <dbReference type="HAMAP-Rule" id="MF_00419"/>
    </source>
</evidence>
<evidence type="ECO:0000256" key="2">
    <source>
        <dbReference type="SAM" id="MobiDB-lite"/>
    </source>
</evidence>
<evidence type="ECO:0000269" key="3">
    <source>
    </source>
</evidence>
<sequence length="1295" mass="141403">MMEILRGSPALSAFRINKLLARFQAARLPVHNIYAEYVHFADLNAPLNDDEHAQLERLLKYGPALASHAPQGKLLLVTPRPGTISPWSSKATDIAHNCGLQQVNRLERGVAYYIEAGTLTNEQWQQVTAELHDRMMETVFFALDDAEQLFAHHQPTPVTSVDLLGQGRQALIDANLRLGLALAEDEIDYLQDAFTKLGRNPNDIELYMFAQANSEHCRHKIFNADWVIDGEQQPKSLFKMIKNTFETTPDHVLSAYKDNAAVMEGSEVGRYFADHETGRYDFHQEPAHILMKVETHNHPTAISPWPGAATGSGGEIRDEGATGRGAKPKAGLVGFSVSNLRIPGFEQPWEEDFGKPERIVTALDIMTEGPLGGAAFNNEFGRPALNGYFRTYEEKVNSHNGEELRGYHKPIMLAGGIGNIRADHVQKGEINVGAKLVVLGGPAMNIGLGGGAASSMASGQSDADLDFASVQRDNPEMERRCQEVIDRCWQLGDANPILFIHDVGAGGLSNAMPELVSDGGRGGKFELREILSDEPGMSPLEIWCNESQERYVLAVAADQLPLFDELCKRERAPYAVIGEATEELHLSLHDRHFDNQPIDLPLDVLLGKTPKMTRDVQTLKAKGDALAREGITIADAVKRVLHLPTVAEKTFLVTIGDRSVTGMVARDQMVGPWQVPVANCAVTTASLDSYYGEAMAIGERAPVALLDFAASARLAVGEALTNIAATQIGDIKRIKLSANWMAAAGHPGEDAGLYEAVKAVGEELCPALGLTIPVGKDSMSMKTRWQEGNEEREMTSPLSLVISAFARVEDVRHTITPQLSTEDNALLLIDLGKGNNALGATALAQVYRQLGDKPADVRDVAQLKGFYDAIQALVAQRKLLAYHDRSDGGLLVTLAEMAFAGHCGIDADIATLGDDRLAALFNEELGAVIQVRAADREAVESVLAQHGLADCVHYVGQAVSGDRFVITANGQTVFSESRTTLRVWWAETTWQMQRLRDNPECADQEHQAKSNDADPGLNVKLSFDINEDVAAPYIATGARPKVAVLREQGVNSHVEMAAAFHRAGFDAIDVHMSDLLTGRTGLEDFHALVACGGFSYGDVLGAGEGWAKSILFNDRVRDEFATFFHRPQTLALGVCNGCQMMSNLRELIPGSELWPRFVRNTSDRFEARFSLVEVTQSPSLLLQGMVGSQMPIAVSHGEGRVEVRDAAHLAALESKGLVALRYVDNFGKVTETYPANPNGSPNGITAVTTESGRVTIMMPHPERVFRTVSNSWHPENWGEDGPWMRIFRNARKQLG</sequence>
<comment type="function">
    <text evidence="1 3">Phosphoribosylformylglycinamidine synthase involved in the purines biosynthetic pathway. Catalyzes the ATP-dependent conversion of formylglycinamide ribonucleotide (FGAR) and glutamine to yield formylglycinamidine ribonucleotide (FGAM) and glutamate.</text>
</comment>
<comment type="catalytic activity">
    <reaction evidence="1 3">
        <text>N(2)-formyl-N(1)-(5-phospho-beta-D-ribosyl)glycinamide + L-glutamine + ATP + H2O = 2-formamido-N(1)-(5-O-phospho-beta-D-ribosyl)acetamidine + L-glutamate + ADP + phosphate + H(+)</text>
        <dbReference type="Rhea" id="RHEA:17129"/>
        <dbReference type="ChEBI" id="CHEBI:15377"/>
        <dbReference type="ChEBI" id="CHEBI:15378"/>
        <dbReference type="ChEBI" id="CHEBI:29985"/>
        <dbReference type="ChEBI" id="CHEBI:30616"/>
        <dbReference type="ChEBI" id="CHEBI:43474"/>
        <dbReference type="ChEBI" id="CHEBI:58359"/>
        <dbReference type="ChEBI" id="CHEBI:147286"/>
        <dbReference type="ChEBI" id="CHEBI:147287"/>
        <dbReference type="ChEBI" id="CHEBI:456216"/>
        <dbReference type="EC" id="6.3.5.3"/>
    </reaction>
</comment>
<comment type="biophysicochemical properties">
    <kinetics>
        <KM evidence="3">64 uM for glutamine (at pH 7.25 and 37 degrees Celsius)</KM>
        <KM evidence="3">51 uM for ATP (at pH 7.25 and 37 degrees Celsius)</KM>
        <KM evidence="3">30 uM for FGAR (formylglycinamide ribonucleotide at pH 7.25 and 37 degrees Celsius)</KM>
    </kinetics>
    <phDependence>
        <text evidence="3">Optimum pH is 7.2 with only 50% of this activity retains at pH 6.2 or 8.0.</text>
    </phDependence>
</comment>
<comment type="pathway">
    <text evidence="1">Purine metabolism; IMP biosynthesis via de novo pathway; 5-amino-1-(5-phospho-D-ribosyl)imidazole from N(2)-formyl-N(1)-(5-phospho-D-ribosyl)glycinamide: step 1/2.</text>
</comment>
<comment type="subunit">
    <text evidence="1 3">Monomer.</text>
</comment>
<comment type="subcellular location">
    <subcellularLocation>
        <location evidence="1 3">Cytoplasm</location>
    </subcellularLocation>
</comment>
<comment type="PTM">
    <text evidence="3">Both N-terminus methionine truncation and retention have been observed for this protein.</text>
</comment>
<comment type="similarity">
    <text evidence="1">In the N-terminal section; belongs to the FGAMS family.</text>
</comment>
<name>PUR4_ECOLI</name>
<organism>
    <name type="scientific">Escherichia coli (strain K12)</name>
    <dbReference type="NCBI Taxonomy" id="83333"/>
    <lineage>
        <taxon>Bacteria</taxon>
        <taxon>Pseudomonadati</taxon>
        <taxon>Pseudomonadota</taxon>
        <taxon>Gammaproteobacteria</taxon>
        <taxon>Enterobacterales</taxon>
        <taxon>Enterobacteriaceae</taxon>
        <taxon>Escherichia</taxon>
    </lineage>
</organism>
<reference key="1">
    <citation type="journal article" date="1989" name="Biochemistry">
        <title>Formylglycinamide ribonucleotide synthetase from Escherichia coli: cloning, sequencing, overproduction, isolation, and characterization.</title>
        <authorList>
            <person name="Schendel F.J."/>
            <person name="Mueller E."/>
            <person name="Stubbe J."/>
            <person name="Shiau A."/>
            <person name="Smith J.M."/>
        </authorList>
    </citation>
    <scope>NUCLEOTIDE SEQUENCE [GENOMIC DNA]</scope>
    <scope>PROTEIN SEQUENCE OF 1-13</scope>
    <scope>FUNCTION</scope>
    <scope>CATALYTIC ACTIVITY</scope>
    <scope>BIOPHYSICOCHEMICAL PROPERTIES</scope>
    <scope>SUBCELLULAR LOCATION</scope>
    <scope>SUBUNIT</scope>
</reference>
<reference key="2">
    <citation type="journal article" date="1989" name="J. Biol. Chem.">
        <title>The organization of the purL gene encoding 5'-phosphoribosylformylglycinamide amidotransferase of Escherichia coli.</title>
        <authorList>
            <person name="Sampei G."/>
            <person name="Mizobuchi K."/>
        </authorList>
    </citation>
    <scope>NUCLEOTIDE SEQUENCE [GENOMIC DNA]</scope>
</reference>
<reference key="3">
    <citation type="journal article" date="1997" name="Science">
        <title>The complete genome sequence of Escherichia coli K-12.</title>
        <authorList>
            <person name="Blattner F.R."/>
            <person name="Plunkett G. III"/>
            <person name="Bloch C.A."/>
            <person name="Perna N.T."/>
            <person name="Burland V."/>
            <person name="Riley M."/>
            <person name="Collado-Vides J."/>
            <person name="Glasner J.D."/>
            <person name="Rode C.K."/>
            <person name="Mayhew G.F."/>
            <person name="Gregor J."/>
            <person name="Davis N.W."/>
            <person name="Kirkpatrick H.A."/>
            <person name="Goeden M.A."/>
            <person name="Rose D.J."/>
            <person name="Mau B."/>
            <person name="Shao Y."/>
        </authorList>
    </citation>
    <scope>NUCLEOTIDE SEQUENCE [LARGE SCALE GENOMIC DNA]</scope>
    <source>
        <strain>K12 / MG1655 / ATCC 47076</strain>
    </source>
</reference>
<reference key="4">
    <citation type="journal article" date="2006" name="Nucleic Acids Res.">
        <title>Escherichia coli K-12: a cooperatively developed annotation snapshot -- 2005.</title>
        <authorList>
            <person name="Riley M."/>
            <person name="Abe T."/>
            <person name="Arnaud M.B."/>
            <person name="Berlyn M.K.B."/>
            <person name="Blattner F.R."/>
            <person name="Chaudhuri R.R."/>
            <person name="Glasner J.D."/>
            <person name="Horiuchi T."/>
            <person name="Keseler I.M."/>
            <person name="Kosuge T."/>
            <person name="Mori H."/>
            <person name="Perna N.T."/>
            <person name="Plunkett G. III"/>
            <person name="Rudd K.E."/>
            <person name="Serres M.H."/>
            <person name="Thomas G.H."/>
            <person name="Thomson N.R."/>
            <person name="Wishart D."/>
            <person name="Wanner B.L."/>
        </authorList>
    </citation>
    <scope>SEQUENCE REVISION TO 847</scope>
</reference>
<reference key="5">
    <citation type="journal article" date="2006" name="Mol. Syst. Biol.">
        <title>Highly accurate genome sequences of Escherichia coli K-12 strains MG1655 and W3110.</title>
        <authorList>
            <person name="Hayashi K."/>
            <person name="Morooka N."/>
            <person name="Yamamoto Y."/>
            <person name="Fujita K."/>
            <person name="Isono K."/>
            <person name="Choi S."/>
            <person name="Ohtsubo E."/>
            <person name="Baba T."/>
            <person name="Wanner B.L."/>
            <person name="Mori H."/>
            <person name="Horiuchi T."/>
        </authorList>
    </citation>
    <scope>NUCLEOTIDE SEQUENCE [LARGE SCALE GENOMIC DNA]</scope>
    <source>
        <strain>K12 / W3110 / ATCC 27325 / DSM 5911</strain>
    </source>
</reference>